<proteinExistence type="evidence at transcript level"/>
<reference key="1">
    <citation type="journal article" date="2000" name="Nature">
        <title>Sequence and analysis of chromosome 1 of the plant Arabidopsis thaliana.</title>
        <authorList>
            <person name="Theologis A."/>
            <person name="Ecker J.R."/>
            <person name="Palm C.J."/>
            <person name="Federspiel N.A."/>
            <person name="Kaul S."/>
            <person name="White O."/>
            <person name="Alonso J."/>
            <person name="Altafi H."/>
            <person name="Araujo R."/>
            <person name="Bowman C.L."/>
            <person name="Brooks S.Y."/>
            <person name="Buehler E."/>
            <person name="Chan A."/>
            <person name="Chao Q."/>
            <person name="Chen H."/>
            <person name="Cheuk R.F."/>
            <person name="Chin C.W."/>
            <person name="Chung M.K."/>
            <person name="Conn L."/>
            <person name="Conway A.B."/>
            <person name="Conway A.R."/>
            <person name="Creasy T.H."/>
            <person name="Dewar K."/>
            <person name="Dunn P."/>
            <person name="Etgu P."/>
            <person name="Feldblyum T.V."/>
            <person name="Feng J.-D."/>
            <person name="Fong B."/>
            <person name="Fujii C.Y."/>
            <person name="Gill J.E."/>
            <person name="Goldsmith A.D."/>
            <person name="Haas B."/>
            <person name="Hansen N.F."/>
            <person name="Hughes B."/>
            <person name="Huizar L."/>
            <person name="Hunter J.L."/>
            <person name="Jenkins J."/>
            <person name="Johnson-Hopson C."/>
            <person name="Khan S."/>
            <person name="Khaykin E."/>
            <person name="Kim C.J."/>
            <person name="Koo H.L."/>
            <person name="Kremenetskaia I."/>
            <person name="Kurtz D.B."/>
            <person name="Kwan A."/>
            <person name="Lam B."/>
            <person name="Langin-Hooper S."/>
            <person name="Lee A."/>
            <person name="Lee J.M."/>
            <person name="Lenz C.A."/>
            <person name="Li J.H."/>
            <person name="Li Y.-P."/>
            <person name="Lin X."/>
            <person name="Liu S.X."/>
            <person name="Liu Z.A."/>
            <person name="Luros J.S."/>
            <person name="Maiti R."/>
            <person name="Marziali A."/>
            <person name="Militscher J."/>
            <person name="Miranda M."/>
            <person name="Nguyen M."/>
            <person name="Nierman W.C."/>
            <person name="Osborne B.I."/>
            <person name="Pai G."/>
            <person name="Peterson J."/>
            <person name="Pham P.K."/>
            <person name="Rizzo M."/>
            <person name="Rooney T."/>
            <person name="Rowley D."/>
            <person name="Sakano H."/>
            <person name="Salzberg S.L."/>
            <person name="Schwartz J.R."/>
            <person name="Shinn P."/>
            <person name="Southwick A.M."/>
            <person name="Sun H."/>
            <person name="Tallon L.J."/>
            <person name="Tambunga G."/>
            <person name="Toriumi M.J."/>
            <person name="Town C.D."/>
            <person name="Utterback T."/>
            <person name="Van Aken S."/>
            <person name="Vaysberg M."/>
            <person name="Vysotskaia V.S."/>
            <person name="Walker M."/>
            <person name="Wu D."/>
            <person name="Yu G."/>
            <person name="Fraser C.M."/>
            <person name="Venter J.C."/>
            <person name="Davis R.W."/>
        </authorList>
    </citation>
    <scope>NUCLEOTIDE SEQUENCE [LARGE SCALE GENOMIC DNA]</scope>
    <source>
        <strain>cv. Columbia</strain>
    </source>
</reference>
<reference key="2">
    <citation type="journal article" date="2017" name="Plant J.">
        <title>Araport11: a complete reannotation of the Arabidopsis thaliana reference genome.</title>
        <authorList>
            <person name="Cheng C.Y."/>
            <person name="Krishnakumar V."/>
            <person name="Chan A.P."/>
            <person name="Thibaud-Nissen F."/>
            <person name="Schobel S."/>
            <person name="Town C.D."/>
        </authorList>
    </citation>
    <scope>GENOME REANNOTATION</scope>
    <source>
        <strain>cv. Columbia</strain>
    </source>
</reference>
<reference key="3">
    <citation type="journal article" date="2003" name="Science">
        <title>Empirical analysis of transcriptional activity in the Arabidopsis genome.</title>
        <authorList>
            <person name="Yamada K."/>
            <person name="Lim J."/>
            <person name="Dale J.M."/>
            <person name="Chen H."/>
            <person name="Shinn P."/>
            <person name="Palm C.J."/>
            <person name="Southwick A.M."/>
            <person name="Wu H.C."/>
            <person name="Kim C.J."/>
            <person name="Nguyen M."/>
            <person name="Pham P.K."/>
            <person name="Cheuk R.F."/>
            <person name="Karlin-Newmann G."/>
            <person name="Liu S.X."/>
            <person name="Lam B."/>
            <person name="Sakano H."/>
            <person name="Wu T."/>
            <person name="Yu G."/>
            <person name="Miranda M."/>
            <person name="Quach H.L."/>
            <person name="Tripp M."/>
            <person name="Chang C.H."/>
            <person name="Lee J.M."/>
            <person name="Toriumi M.J."/>
            <person name="Chan M.M."/>
            <person name="Tang C.C."/>
            <person name="Onodera C.S."/>
            <person name="Deng J.M."/>
            <person name="Akiyama K."/>
            <person name="Ansari Y."/>
            <person name="Arakawa T."/>
            <person name="Banh J."/>
            <person name="Banno F."/>
            <person name="Bowser L."/>
            <person name="Brooks S.Y."/>
            <person name="Carninci P."/>
            <person name="Chao Q."/>
            <person name="Choy N."/>
            <person name="Enju A."/>
            <person name="Goldsmith A.D."/>
            <person name="Gurjal M."/>
            <person name="Hansen N.F."/>
            <person name="Hayashizaki Y."/>
            <person name="Johnson-Hopson C."/>
            <person name="Hsuan V.W."/>
            <person name="Iida K."/>
            <person name="Karnes M."/>
            <person name="Khan S."/>
            <person name="Koesema E."/>
            <person name="Ishida J."/>
            <person name="Jiang P.X."/>
            <person name="Jones T."/>
            <person name="Kawai J."/>
            <person name="Kamiya A."/>
            <person name="Meyers C."/>
            <person name="Nakajima M."/>
            <person name="Narusaka M."/>
            <person name="Seki M."/>
            <person name="Sakurai T."/>
            <person name="Satou M."/>
            <person name="Tamse R."/>
            <person name="Vaysberg M."/>
            <person name="Wallender E.K."/>
            <person name="Wong C."/>
            <person name="Yamamura Y."/>
            <person name="Yuan S."/>
            <person name="Shinozaki K."/>
            <person name="Davis R.W."/>
            <person name="Theologis A."/>
            <person name="Ecker J.R."/>
        </authorList>
    </citation>
    <scope>NUCLEOTIDE SEQUENCE [LARGE SCALE MRNA]</scope>
    <source>
        <strain>cv. Columbia</strain>
    </source>
</reference>
<dbReference type="EC" id="4.4.1.5"/>
<dbReference type="EMBL" id="AC026875">
    <property type="protein sequence ID" value="AAF79827.1"/>
    <property type="status" value="ALT_SEQ"/>
    <property type="molecule type" value="Genomic_DNA"/>
</dbReference>
<dbReference type="EMBL" id="CP002684">
    <property type="protein sequence ID" value="AEE28243.1"/>
    <property type="molecule type" value="Genomic_DNA"/>
</dbReference>
<dbReference type="EMBL" id="CP002684">
    <property type="protein sequence ID" value="AEE28244.1"/>
    <property type="molecule type" value="Genomic_DNA"/>
</dbReference>
<dbReference type="EMBL" id="CP002684">
    <property type="protein sequence ID" value="AEE28245.1"/>
    <property type="molecule type" value="Genomic_DNA"/>
</dbReference>
<dbReference type="EMBL" id="BT002020">
    <property type="protein sequence ID" value="AAN72031.1"/>
    <property type="molecule type" value="mRNA"/>
</dbReference>
<dbReference type="EMBL" id="BT014867">
    <property type="protein sequence ID" value="AAT41850.1"/>
    <property type="molecule type" value="mRNA"/>
</dbReference>
<dbReference type="PIR" id="G86215">
    <property type="entry name" value="G86215"/>
</dbReference>
<dbReference type="RefSeq" id="NP_001030995.1">
    <molecule id="Q8H0V3-1"/>
    <property type="nucleotide sequence ID" value="NM_001035918.2"/>
</dbReference>
<dbReference type="RefSeq" id="NP_172291.1">
    <molecule id="Q8H0V3-1"/>
    <property type="nucleotide sequence ID" value="NM_100687.4"/>
</dbReference>
<dbReference type="RefSeq" id="NP_849609.1">
    <molecule id="Q8H0V3-1"/>
    <property type="nucleotide sequence ID" value="NM_179278.2"/>
</dbReference>
<dbReference type="SMR" id="Q8H0V3"/>
<dbReference type="BioGRID" id="22571">
    <property type="interactions" value="1"/>
</dbReference>
<dbReference type="FunCoup" id="Q8H0V3">
    <property type="interactions" value="2784"/>
</dbReference>
<dbReference type="STRING" id="3702.Q8H0V3"/>
<dbReference type="iPTMnet" id="Q8H0V3"/>
<dbReference type="MetOSite" id="Q8H0V3"/>
<dbReference type="PaxDb" id="3702-AT1G08110.4"/>
<dbReference type="ProteomicsDB" id="250744">
    <molecule id="Q8H0V3-1"/>
</dbReference>
<dbReference type="EnsemblPlants" id="AT1G08110.1">
    <molecule id="Q8H0V3-1"/>
    <property type="protein sequence ID" value="AT1G08110.1"/>
    <property type="gene ID" value="AT1G08110"/>
</dbReference>
<dbReference type="EnsemblPlants" id="AT1G08110.2">
    <molecule id="Q8H0V3-1"/>
    <property type="protein sequence ID" value="AT1G08110.2"/>
    <property type="gene ID" value="AT1G08110"/>
</dbReference>
<dbReference type="EnsemblPlants" id="AT1G08110.3">
    <molecule id="Q8H0V3-1"/>
    <property type="protein sequence ID" value="AT1G08110.3"/>
    <property type="gene ID" value="AT1G08110"/>
</dbReference>
<dbReference type="GeneID" id="837330"/>
<dbReference type="Gramene" id="AT1G08110.1">
    <molecule id="Q8H0V3-1"/>
    <property type="protein sequence ID" value="AT1G08110.1"/>
    <property type="gene ID" value="AT1G08110"/>
</dbReference>
<dbReference type="Gramene" id="AT1G08110.2">
    <molecule id="Q8H0V3-1"/>
    <property type="protein sequence ID" value="AT1G08110.2"/>
    <property type="gene ID" value="AT1G08110"/>
</dbReference>
<dbReference type="Gramene" id="AT1G08110.3">
    <molecule id="Q8H0V3-1"/>
    <property type="protein sequence ID" value="AT1G08110.3"/>
    <property type="gene ID" value="AT1G08110"/>
</dbReference>
<dbReference type="KEGG" id="ath:AT1G08110"/>
<dbReference type="Araport" id="AT1G08110"/>
<dbReference type="TAIR" id="AT1G08110">
    <property type="gene designation" value="ATGLYI2"/>
</dbReference>
<dbReference type="eggNOG" id="KOG2944">
    <property type="taxonomic scope" value="Eukaryota"/>
</dbReference>
<dbReference type="HOGENOM" id="CLU_046006_1_3_1"/>
<dbReference type="InParanoid" id="Q8H0V3"/>
<dbReference type="PhylomeDB" id="Q8H0V3"/>
<dbReference type="BioCyc" id="ARA:AT1G08110-MONOMER"/>
<dbReference type="UniPathway" id="UPA00619">
    <property type="reaction ID" value="UER00675"/>
</dbReference>
<dbReference type="PRO" id="PR:Q8H0V3"/>
<dbReference type="Proteomes" id="UP000006548">
    <property type="component" value="Chromosome 1"/>
</dbReference>
<dbReference type="ExpressionAtlas" id="Q8H0V3">
    <property type="expression patterns" value="baseline and differential"/>
</dbReference>
<dbReference type="GO" id="GO:0004462">
    <property type="term" value="F:lactoylglutathione lyase activity"/>
    <property type="evidence" value="ECO:0007669"/>
    <property type="project" value="UniProtKB-EC"/>
</dbReference>
<dbReference type="GO" id="GO:0046872">
    <property type="term" value="F:metal ion binding"/>
    <property type="evidence" value="ECO:0007669"/>
    <property type="project" value="UniProtKB-KW"/>
</dbReference>
<dbReference type="GO" id="GO:0019904">
    <property type="term" value="F:protein domain specific binding"/>
    <property type="evidence" value="ECO:0000353"/>
    <property type="project" value="CAFA"/>
</dbReference>
<dbReference type="CDD" id="cd07233">
    <property type="entry name" value="GlxI_Zn"/>
    <property type="match status" value="1"/>
</dbReference>
<dbReference type="FunFam" id="3.10.180.10:FF:000011">
    <property type="entry name" value="Lactoylglutathione lyase"/>
    <property type="match status" value="1"/>
</dbReference>
<dbReference type="Gene3D" id="3.10.180.10">
    <property type="entry name" value="2,3-Dihydroxybiphenyl 1,2-Dioxygenase, domain 1"/>
    <property type="match status" value="1"/>
</dbReference>
<dbReference type="InterPro" id="IPR029068">
    <property type="entry name" value="Glyas_Bleomycin-R_OHBP_Dase"/>
</dbReference>
<dbReference type="InterPro" id="IPR004360">
    <property type="entry name" value="Glyas_Fos-R_dOase_dom"/>
</dbReference>
<dbReference type="InterPro" id="IPR004361">
    <property type="entry name" value="Glyoxalase_1"/>
</dbReference>
<dbReference type="InterPro" id="IPR018146">
    <property type="entry name" value="Glyoxalase_1_CS"/>
</dbReference>
<dbReference type="InterPro" id="IPR037523">
    <property type="entry name" value="VOC"/>
</dbReference>
<dbReference type="NCBIfam" id="TIGR00068">
    <property type="entry name" value="glyox_I"/>
    <property type="match status" value="1"/>
</dbReference>
<dbReference type="PANTHER" id="PTHR10374:SF30">
    <property type="entry name" value="LACTOYLGLUTATHIONE LYASE"/>
    <property type="match status" value="1"/>
</dbReference>
<dbReference type="PANTHER" id="PTHR10374">
    <property type="entry name" value="LACTOYLGLUTATHIONE LYASE GLYOXALASE I"/>
    <property type="match status" value="1"/>
</dbReference>
<dbReference type="Pfam" id="PF00903">
    <property type="entry name" value="Glyoxalase"/>
    <property type="match status" value="1"/>
</dbReference>
<dbReference type="SUPFAM" id="SSF54593">
    <property type="entry name" value="Glyoxalase/Bleomycin resistance protein/Dihydroxybiphenyl dioxygenase"/>
    <property type="match status" value="1"/>
</dbReference>
<dbReference type="PROSITE" id="PS00934">
    <property type="entry name" value="GLYOXALASE_I_1"/>
    <property type="match status" value="1"/>
</dbReference>
<dbReference type="PROSITE" id="PS00935">
    <property type="entry name" value="GLYOXALASE_I_2"/>
    <property type="match status" value="1"/>
</dbReference>
<dbReference type="PROSITE" id="PS51819">
    <property type="entry name" value="VOC"/>
    <property type="match status" value="1"/>
</dbReference>
<accession>Q8H0V3</accession>
<accession>Q9LMZ7</accession>
<name>LGUL_ARATH</name>
<keyword id="KW-0025">Alternative splicing</keyword>
<keyword id="KW-0456">Lyase</keyword>
<keyword id="KW-0479">Metal-binding</keyword>
<keyword id="KW-1185">Reference proteome</keyword>
<keyword id="KW-0862">Zinc</keyword>
<comment type="function">
    <text evidence="1">Catalyzes the conversion of hemimercaptal, formed from methylglyoxal and glutathione, to S-lactoylglutathione.</text>
</comment>
<comment type="catalytic activity">
    <reaction>
        <text>(R)-S-lactoylglutathione = methylglyoxal + glutathione</text>
        <dbReference type="Rhea" id="RHEA:19069"/>
        <dbReference type="ChEBI" id="CHEBI:17158"/>
        <dbReference type="ChEBI" id="CHEBI:57474"/>
        <dbReference type="ChEBI" id="CHEBI:57925"/>
        <dbReference type="EC" id="4.4.1.5"/>
    </reaction>
</comment>
<comment type="cofactor">
    <cofactor evidence="1">
        <name>Zn(2+)</name>
        <dbReference type="ChEBI" id="CHEBI:29105"/>
    </cofactor>
    <text evidence="1">Binds 1 zinc ion per subunit.</text>
</comment>
<comment type="pathway">
    <text>Secondary metabolite metabolism; methylglyoxal degradation; (R)-lactate from methylglyoxal: step 1/2.</text>
</comment>
<comment type="alternative products">
    <event type="alternative splicing"/>
    <isoform>
        <id>Q8H0V3-1</id>
        <name>1</name>
        <sequence type="displayed"/>
    </isoform>
    <text>A number of isoforms are produced. According to EST sequences.</text>
</comment>
<comment type="similarity">
    <text evidence="4">Belongs to the glyoxalase I family.</text>
</comment>
<comment type="sequence caution" evidence="4">
    <conflict type="erroneous gene model prediction">
        <sequence resource="EMBL-CDS" id="AAF79827"/>
    </conflict>
</comment>
<gene>
    <name type="ordered locus">At1g08110</name>
    <name type="ORF">T6D22.20</name>
</gene>
<protein>
    <recommendedName>
        <fullName>Lactoylglutathione lyase</fullName>
        <ecNumber>4.4.1.5</ecNumber>
    </recommendedName>
    <alternativeName>
        <fullName>Aldoketomutase</fullName>
    </alternativeName>
    <alternativeName>
        <fullName>Glyoxalase I</fullName>
        <shortName>Glx I</shortName>
    </alternativeName>
    <alternativeName>
        <fullName>Ketone-aldehyde mutase</fullName>
    </alternativeName>
    <alternativeName>
        <fullName>Methylglyoxalase</fullName>
    </alternativeName>
    <alternativeName>
        <fullName>S-D-lactoylglutathione methylglyoxal lyase</fullName>
    </alternativeName>
</protein>
<evidence type="ECO:0000250" key="1"/>
<evidence type="ECO:0000255" key="2">
    <source>
        <dbReference type="PROSITE-ProRule" id="PRU01163"/>
    </source>
</evidence>
<evidence type="ECO:0000256" key="3">
    <source>
        <dbReference type="SAM" id="MobiDB-lite"/>
    </source>
</evidence>
<evidence type="ECO:0000305" key="4"/>
<organism>
    <name type="scientific">Arabidopsis thaliana</name>
    <name type="common">Mouse-ear cress</name>
    <dbReference type="NCBI Taxonomy" id="3702"/>
    <lineage>
        <taxon>Eukaryota</taxon>
        <taxon>Viridiplantae</taxon>
        <taxon>Streptophyta</taxon>
        <taxon>Embryophyta</taxon>
        <taxon>Tracheophyta</taxon>
        <taxon>Spermatophyta</taxon>
        <taxon>Magnoliopsida</taxon>
        <taxon>eudicotyledons</taxon>
        <taxon>Gunneridae</taxon>
        <taxon>Pentapetalae</taxon>
        <taxon>rosids</taxon>
        <taxon>malvids</taxon>
        <taxon>Brassicales</taxon>
        <taxon>Brassicaceae</taxon>
        <taxon>Camelineae</taxon>
        <taxon>Arabidopsis</taxon>
    </lineage>
</organism>
<feature type="chain" id="PRO_0000168080" description="Lactoylglutathione lyase">
    <location>
        <begin position="1"/>
        <end position="185"/>
    </location>
</feature>
<feature type="domain" description="VOC" evidence="2">
    <location>
        <begin position="27"/>
        <end position="174"/>
    </location>
</feature>
<feature type="region of interest" description="Disordered" evidence="3">
    <location>
        <begin position="1"/>
        <end position="22"/>
    </location>
</feature>
<feature type="active site" description="Proton donor/acceptor" evidence="1">
    <location>
        <position position="170"/>
    </location>
</feature>
<feature type="binding site" evidence="1">
    <location>
        <position position="30"/>
    </location>
    <ligand>
        <name>substrate</name>
    </ligand>
</feature>
<feature type="binding site" evidence="1">
    <location>
        <position position="30"/>
    </location>
    <ligand>
        <name>Zn(2+)</name>
        <dbReference type="ChEBI" id="CHEBI:29105"/>
    </ligand>
</feature>
<feature type="binding site" evidence="1">
    <location>
        <position position="34"/>
    </location>
    <ligand>
        <name>substrate</name>
    </ligand>
</feature>
<feature type="binding site" evidence="1">
    <location>
        <position position="96"/>
    </location>
    <ligand>
        <name>Zn(2+)</name>
        <dbReference type="ChEBI" id="CHEBI:29105"/>
    </ligand>
</feature>
<feature type="binding site" evidence="1">
    <location>
        <position position="100"/>
    </location>
    <ligand>
        <name>substrate</name>
    </ligand>
</feature>
<feature type="binding site" evidence="1">
    <location>
        <position position="120"/>
    </location>
    <ligand>
        <name>substrate</name>
    </ligand>
</feature>
<feature type="binding site" evidence="1">
    <location>
        <position position="124"/>
    </location>
    <ligand>
        <name>substrate</name>
    </ligand>
</feature>
<feature type="binding site" evidence="1">
    <location>
        <position position="124"/>
    </location>
    <ligand>
        <name>Zn(2+)</name>
        <dbReference type="ChEBI" id="CHEBI:29105"/>
    </ligand>
</feature>
<feature type="binding site" evidence="1">
    <location>
        <begin position="154"/>
        <end position="155"/>
    </location>
    <ligand>
        <name>substrate</name>
    </ligand>
</feature>
<feature type="binding site" evidence="1">
    <location>
        <position position="170"/>
    </location>
    <ligand>
        <name>Zn(2+)</name>
        <dbReference type="ChEBI" id="CHEBI:29105"/>
    </ligand>
</feature>
<sequence length="185" mass="20848">MASEARESPANNPGLSTNRDEATKGYIMQQTMFRIKDPKASLDFYSRVLGMSLLKRLDFSEMKFSLYFLGYEDTTTAPTDPTERTVWTFGQPATIELTHNWGTESDPEFKGYHNGNSEPRGFGHIGVTVDDVHKACERFEELGVEFAKKPNDGKMKNIAFIKDPDGYWIEIFDLKTIGTTTVNAA</sequence>